<protein>
    <recommendedName>
        <fullName>Methylcrotonoyl-CoA carboxylase beta chain, mitochondrial</fullName>
        <shortName>MCCase subunit beta</shortName>
        <ecNumber>6.4.1.4</ecNumber>
    </recommendedName>
    <alternativeName>
        <fullName>3-methylcrotonyl-CoA carboxylase 2</fullName>
    </alternativeName>
    <alternativeName>
        <fullName>3-methylcrotonyl-CoA carboxylase non-biotin-containing subunit</fullName>
    </alternativeName>
    <alternativeName>
        <fullName>3-methylcrotonyl-CoA:carbon dioxide ligase subunit beta</fullName>
    </alternativeName>
</protein>
<comment type="function">
    <text evidence="1">Carboxyltransferase subunit of the 3-methylcrotonyl-CoA carboxylase, an enzyme that catalyzes the conversion of 3-methylcrotonyl-CoA to 3-methylglutaconyl-CoA, a critical step for leucine and isovaleric acid catabolism.</text>
</comment>
<comment type="catalytic activity">
    <reaction>
        <text>3-methylbut-2-enoyl-CoA + hydrogencarbonate + ATP = 3-methyl-(2E)-glutaconyl-CoA + ADP + phosphate + H(+)</text>
        <dbReference type="Rhea" id="RHEA:13589"/>
        <dbReference type="ChEBI" id="CHEBI:15378"/>
        <dbReference type="ChEBI" id="CHEBI:17544"/>
        <dbReference type="ChEBI" id="CHEBI:30616"/>
        <dbReference type="ChEBI" id="CHEBI:43474"/>
        <dbReference type="ChEBI" id="CHEBI:57344"/>
        <dbReference type="ChEBI" id="CHEBI:57346"/>
        <dbReference type="ChEBI" id="CHEBI:456216"/>
        <dbReference type="EC" id="6.4.1.4"/>
    </reaction>
</comment>
<comment type="pathway">
    <text>Amino-acid degradation; L-leucine degradation; (S)-3-hydroxy-3-methylglutaryl-CoA from 3-isovaleryl-CoA: step 2/3.</text>
</comment>
<comment type="subunit">
    <text evidence="1">Probably a dodecamer composed of six biotin-containing alpha subunits and six beta subunits.</text>
</comment>
<comment type="subcellular location">
    <subcellularLocation>
        <location evidence="1">Mitochondrion matrix</location>
    </subcellularLocation>
</comment>
<comment type="similarity">
    <text evidence="6">Belongs to the AccD/PCCB family.</text>
</comment>
<organism>
    <name type="scientific">Dictyostelium discoideum</name>
    <name type="common">Social amoeba</name>
    <dbReference type="NCBI Taxonomy" id="44689"/>
    <lineage>
        <taxon>Eukaryota</taxon>
        <taxon>Amoebozoa</taxon>
        <taxon>Evosea</taxon>
        <taxon>Eumycetozoa</taxon>
        <taxon>Dictyostelia</taxon>
        <taxon>Dictyosteliales</taxon>
        <taxon>Dictyosteliaceae</taxon>
        <taxon>Dictyostelium</taxon>
    </lineage>
</organism>
<gene>
    <name type="primary">mccb</name>
    <name type="synonym">mccc2</name>
    <name type="ORF">DDB_G0271960</name>
</gene>
<feature type="transit peptide" description="Mitochondrion" evidence="2">
    <location>
        <begin position="1"/>
        <end status="unknown"/>
    </location>
</feature>
<feature type="chain" id="PRO_0000327449" description="Methylcrotonoyl-CoA carboxylase beta chain, mitochondrial">
    <location>
        <begin status="unknown"/>
        <end position="588"/>
    </location>
</feature>
<feature type="domain" description="CoA carboxyltransferase N-terminal" evidence="3">
    <location>
        <begin position="72"/>
        <end position="329"/>
    </location>
</feature>
<feature type="domain" description="CoA carboxyltransferase C-terminal" evidence="4">
    <location>
        <begin position="329"/>
        <end position="570"/>
    </location>
</feature>
<feature type="region of interest" description="Carboxyltransferase" evidence="5">
    <location>
        <begin position="72"/>
        <end position="570"/>
    </location>
</feature>
<feature type="region of interest" description="Acyl-CoA binding" evidence="2">
    <location>
        <begin position="366"/>
        <end position="395"/>
    </location>
</feature>
<accession>Q8T2J9</accession>
<accession>Q55AB9</accession>
<sequence length="588" mass="64025">MLKSISLLKNNQILLKNIINNGRIINNVGEKLSSKSLLKINYSSSTTDRTFNILDGTIDKNSAEYKDNLINMNSTLKQLKENIEKIKLGGGEKLNQKNISRGKLLVRERIEALIDVGSPFLEFSQLAGWGMYGKEEVAAGGIITGIGKIHGVECVIVANDSTVKGGTYFPITVKKHLRAQEIAQENNLPCIYLVDSGGANLPRQADVFPDRDHFGRIFFNQANMSAKRIPQIAVVMGSCTAGGAYVPAMADESVIVKGTGTIFLGGPPLVKAATGEIVTSEELGGADLHCRTSGVTDHYARDDAEAIAITRRIVSNLNRKKQPSPVITETEEPLYPTSELAGIVPSDLKKNFDIRKVIARLVDGSRFDEFKELYGTTLICGFARVHGMPVGIIANNGILFSESAVKGAHFIELCNQRGIPLVFLQNITGFMVGKTYESKGIAKDGAKMVMAVATAKVPKITMIIGGSFGAGNYGMCGRSYSPRFLYMWPNAKISVMGGEQAASVLAQIQKDNMAKENKQWSPEEENTFKKPISDKFEEEGSIYYSSARCWDDGVIDPQDSRKVIALSLSACMNQPINPPSDGFGVFRM</sequence>
<evidence type="ECO:0000250" key="1"/>
<evidence type="ECO:0000255" key="2"/>
<evidence type="ECO:0000255" key="3">
    <source>
        <dbReference type="PROSITE-ProRule" id="PRU01136"/>
    </source>
</evidence>
<evidence type="ECO:0000255" key="4">
    <source>
        <dbReference type="PROSITE-ProRule" id="PRU01137"/>
    </source>
</evidence>
<evidence type="ECO:0000255" key="5">
    <source>
        <dbReference type="PROSITE-ProRule" id="PRU01138"/>
    </source>
</evidence>
<evidence type="ECO:0000305" key="6"/>
<proteinExistence type="inferred from homology"/>
<reference key="1">
    <citation type="journal article" date="2002" name="Nature">
        <title>Sequence and analysis of chromosome 2 of Dictyostelium discoideum.</title>
        <authorList>
            <person name="Gloeckner G."/>
            <person name="Eichinger L."/>
            <person name="Szafranski K."/>
            <person name="Pachebat J.A."/>
            <person name="Bankier A.T."/>
            <person name="Dear P.H."/>
            <person name="Lehmann R."/>
            <person name="Baumgart C."/>
            <person name="Parra G."/>
            <person name="Abril J.F."/>
            <person name="Guigo R."/>
            <person name="Kumpf K."/>
            <person name="Tunggal B."/>
            <person name="Cox E.C."/>
            <person name="Quail M.A."/>
            <person name="Platzer M."/>
            <person name="Rosenthal A."/>
            <person name="Noegel A.A."/>
        </authorList>
    </citation>
    <scope>NUCLEOTIDE SEQUENCE [LARGE SCALE GENOMIC DNA]</scope>
    <source>
        <strain>AX4</strain>
    </source>
</reference>
<reference key="2">
    <citation type="journal article" date="2005" name="Nature">
        <title>The genome of the social amoeba Dictyostelium discoideum.</title>
        <authorList>
            <person name="Eichinger L."/>
            <person name="Pachebat J.A."/>
            <person name="Gloeckner G."/>
            <person name="Rajandream M.A."/>
            <person name="Sucgang R."/>
            <person name="Berriman M."/>
            <person name="Song J."/>
            <person name="Olsen R."/>
            <person name="Szafranski K."/>
            <person name="Xu Q."/>
            <person name="Tunggal B."/>
            <person name="Kummerfeld S."/>
            <person name="Madera M."/>
            <person name="Konfortov B.A."/>
            <person name="Rivero F."/>
            <person name="Bankier A.T."/>
            <person name="Lehmann R."/>
            <person name="Hamlin N."/>
            <person name="Davies R."/>
            <person name="Gaudet P."/>
            <person name="Fey P."/>
            <person name="Pilcher K."/>
            <person name="Chen G."/>
            <person name="Saunders D."/>
            <person name="Sodergren E.J."/>
            <person name="Davis P."/>
            <person name="Kerhornou A."/>
            <person name="Nie X."/>
            <person name="Hall N."/>
            <person name="Anjard C."/>
            <person name="Hemphill L."/>
            <person name="Bason N."/>
            <person name="Farbrother P."/>
            <person name="Desany B."/>
            <person name="Just E."/>
            <person name="Morio T."/>
            <person name="Rost R."/>
            <person name="Churcher C.M."/>
            <person name="Cooper J."/>
            <person name="Haydock S."/>
            <person name="van Driessche N."/>
            <person name="Cronin A."/>
            <person name="Goodhead I."/>
            <person name="Muzny D.M."/>
            <person name="Mourier T."/>
            <person name="Pain A."/>
            <person name="Lu M."/>
            <person name="Harper D."/>
            <person name="Lindsay R."/>
            <person name="Hauser H."/>
            <person name="James K.D."/>
            <person name="Quiles M."/>
            <person name="Madan Babu M."/>
            <person name="Saito T."/>
            <person name="Buchrieser C."/>
            <person name="Wardroper A."/>
            <person name="Felder M."/>
            <person name="Thangavelu M."/>
            <person name="Johnson D."/>
            <person name="Knights A."/>
            <person name="Loulseged H."/>
            <person name="Mungall K.L."/>
            <person name="Oliver K."/>
            <person name="Price C."/>
            <person name="Quail M.A."/>
            <person name="Urushihara H."/>
            <person name="Hernandez J."/>
            <person name="Rabbinowitsch E."/>
            <person name="Steffen D."/>
            <person name="Sanders M."/>
            <person name="Ma J."/>
            <person name="Kohara Y."/>
            <person name="Sharp S."/>
            <person name="Simmonds M.N."/>
            <person name="Spiegler S."/>
            <person name="Tivey A."/>
            <person name="Sugano S."/>
            <person name="White B."/>
            <person name="Walker D."/>
            <person name="Woodward J.R."/>
            <person name="Winckler T."/>
            <person name="Tanaka Y."/>
            <person name="Shaulsky G."/>
            <person name="Schleicher M."/>
            <person name="Weinstock G.M."/>
            <person name="Rosenthal A."/>
            <person name="Cox E.C."/>
            <person name="Chisholm R.L."/>
            <person name="Gibbs R.A."/>
            <person name="Loomis W.F."/>
            <person name="Platzer M."/>
            <person name="Kay R.R."/>
            <person name="Williams J.G."/>
            <person name="Dear P.H."/>
            <person name="Noegel A.A."/>
            <person name="Barrell B.G."/>
            <person name="Kuspa A."/>
        </authorList>
    </citation>
    <scope>NUCLEOTIDE SEQUENCE [LARGE SCALE GENOMIC DNA]</scope>
    <source>
        <strain>AX4</strain>
    </source>
</reference>
<keyword id="KW-0067">ATP-binding</keyword>
<keyword id="KW-0436">Ligase</keyword>
<keyword id="KW-0496">Mitochondrion</keyword>
<keyword id="KW-0547">Nucleotide-binding</keyword>
<keyword id="KW-1185">Reference proteome</keyword>
<keyword id="KW-0809">Transit peptide</keyword>
<dbReference type="EC" id="6.4.1.4"/>
<dbReference type="EMBL" id="AAFI02000007">
    <property type="protein sequence ID" value="EAL71414.1"/>
    <property type="molecule type" value="Genomic_DNA"/>
</dbReference>
<dbReference type="RefSeq" id="XP_645342.1">
    <property type="nucleotide sequence ID" value="XM_640250.1"/>
</dbReference>
<dbReference type="SMR" id="Q8T2J9"/>
<dbReference type="FunCoup" id="Q8T2J9">
    <property type="interactions" value="391"/>
</dbReference>
<dbReference type="STRING" id="44689.Q8T2J9"/>
<dbReference type="PaxDb" id="44689-DDB0234167"/>
<dbReference type="EnsemblProtists" id="EAL71414">
    <property type="protein sequence ID" value="EAL71414"/>
    <property type="gene ID" value="DDB_G0271960"/>
</dbReference>
<dbReference type="GeneID" id="8618230"/>
<dbReference type="KEGG" id="ddi:DDB_G0271960"/>
<dbReference type="dictyBase" id="DDB_G0271960">
    <property type="gene designation" value="mccB"/>
</dbReference>
<dbReference type="VEuPathDB" id="AmoebaDB:DDB_G0271960"/>
<dbReference type="eggNOG" id="KOG0540">
    <property type="taxonomic scope" value="Eukaryota"/>
</dbReference>
<dbReference type="HOGENOM" id="CLU_018822_0_1_1"/>
<dbReference type="InParanoid" id="Q8T2J9"/>
<dbReference type="OMA" id="GATTHCE"/>
<dbReference type="PhylomeDB" id="Q8T2J9"/>
<dbReference type="Reactome" id="R-DDI-196780">
    <property type="pathway name" value="Biotin transport and metabolism"/>
</dbReference>
<dbReference type="Reactome" id="R-DDI-70895">
    <property type="pathway name" value="Branched-chain amino acid catabolism"/>
</dbReference>
<dbReference type="UniPathway" id="UPA00363">
    <property type="reaction ID" value="UER00861"/>
</dbReference>
<dbReference type="PRO" id="PR:Q8T2J9"/>
<dbReference type="Proteomes" id="UP000002195">
    <property type="component" value="Chromosome 2"/>
</dbReference>
<dbReference type="GO" id="GO:1905202">
    <property type="term" value="C:methylcrotonoyl-CoA carboxylase complex"/>
    <property type="evidence" value="ECO:0000318"/>
    <property type="project" value="GO_Central"/>
</dbReference>
<dbReference type="GO" id="GO:0005759">
    <property type="term" value="C:mitochondrial matrix"/>
    <property type="evidence" value="ECO:0007669"/>
    <property type="project" value="UniProtKB-SubCell"/>
</dbReference>
<dbReference type="GO" id="GO:0005739">
    <property type="term" value="C:mitochondrion"/>
    <property type="evidence" value="ECO:0000318"/>
    <property type="project" value="GO_Central"/>
</dbReference>
<dbReference type="GO" id="GO:0005524">
    <property type="term" value="F:ATP binding"/>
    <property type="evidence" value="ECO:0007669"/>
    <property type="project" value="UniProtKB-KW"/>
</dbReference>
<dbReference type="GO" id="GO:0004485">
    <property type="term" value="F:methylcrotonoyl-CoA carboxylase activity"/>
    <property type="evidence" value="ECO:0007669"/>
    <property type="project" value="UniProtKB-EC"/>
</dbReference>
<dbReference type="GO" id="GO:0006552">
    <property type="term" value="P:L-leucine catabolic process"/>
    <property type="evidence" value="ECO:0000318"/>
    <property type="project" value="GO_Central"/>
</dbReference>
<dbReference type="FunFam" id="3.90.226.10:FF:000004">
    <property type="entry name" value="Methylcrotonoyl-CoA carboxylase beta chain"/>
    <property type="match status" value="1"/>
</dbReference>
<dbReference type="FunFam" id="3.90.226.10:FF:000007">
    <property type="entry name" value="Methylcrotonoyl-CoA carboxylase subunit beta"/>
    <property type="match status" value="1"/>
</dbReference>
<dbReference type="Gene3D" id="3.90.226.10">
    <property type="entry name" value="2-enoyl-CoA Hydratase, Chain A, domain 1"/>
    <property type="match status" value="2"/>
</dbReference>
<dbReference type="InterPro" id="IPR034733">
    <property type="entry name" value="AcCoA_carboxyl_beta"/>
</dbReference>
<dbReference type="InterPro" id="IPR029045">
    <property type="entry name" value="ClpP/crotonase-like_dom_sf"/>
</dbReference>
<dbReference type="InterPro" id="IPR011763">
    <property type="entry name" value="COA_CT_C"/>
</dbReference>
<dbReference type="InterPro" id="IPR011762">
    <property type="entry name" value="COA_CT_N"/>
</dbReference>
<dbReference type="InterPro" id="IPR045190">
    <property type="entry name" value="MCCB/AccD1-like"/>
</dbReference>
<dbReference type="PANTHER" id="PTHR22855">
    <property type="entry name" value="ACETYL, PROPIONYL, PYRUVATE, AND GLUTACONYL CARBOXYLASE-RELATED"/>
    <property type="match status" value="1"/>
</dbReference>
<dbReference type="PANTHER" id="PTHR22855:SF13">
    <property type="entry name" value="METHYLCROTONOYL-COA CARBOXYLASE BETA CHAIN, MITOCHONDRIAL"/>
    <property type="match status" value="1"/>
</dbReference>
<dbReference type="Pfam" id="PF01039">
    <property type="entry name" value="Carboxyl_trans"/>
    <property type="match status" value="1"/>
</dbReference>
<dbReference type="SUPFAM" id="SSF52096">
    <property type="entry name" value="ClpP/crotonase"/>
    <property type="match status" value="2"/>
</dbReference>
<dbReference type="PROSITE" id="PS50989">
    <property type="entry name" value="COA_CT_CTER"/>
    <property type="match status" value="1"/>
</dbReference>
<dbReference type="PROSITE" id="PS50980">
    <property type="entry name" value="COA_CT_NTER"/>
    <property type="match status" value="1"/>
</dbReference>
<name>MCCB_DICDI</name>